<reference key="1">
    <citation type="journal article" date="2004" name="Gene">
        <title>The complete nucleotide sequence of wild rice (Oryza nivara) chloroplast genome: first genome wide comparative sequence analysis of wild and cultivated rice.</title>
        <authorList>
            <person name="Masood M.S."/>
            <person name="Nishikawa T."/>
            <person name="Fukuoka S."/>
            <person name="Njenga P.K."/>
            <person name="Tsudzuki T."/>
            <person name="Kadowaki K."/>
        </authorList>
    </citation>
    <scope>NUCLEOTIDE SEQUENCE [LARGE SCALE GENOMIC DNA]</scope>
    <source>
        <strain evidence="2">cv. SL10</strain>
    </source>
</reference>
<keyword id="KW-0150">Chloroplast</keyword>
<keyword id="KW-0934">Plastid</keyword>
<keyword id="KW-1185">Reference proteome</keyword>
<geneLocation type="chloroplast"/>
<evidence type="ECO:0000305" key="1"/>
<evidence type="ECO:0000312" key="2">
    <source>
        <dbReference type="Proteomes" id="UP000006591"/>
    </source>
</evidence>
<gene>
    <name type="primary">ycf70</name>
</gene>
<dbReference type="EMBL" id="AP006728">
    <property type="protein sequence ID" value="BAD26764.1"/>
    <property type="molecule type" value="Genomic_DNA"/>
</dbReference>
<dbReference type="RefSeq" id="YP_052735.1">
    <property type="nucleotide sequence ID" value="NC_005973.1"/>
</dbReference>
<dbReference type="Proteomes" id="UP000006591">
    <property type="component" value="Chloroplast"/>
</dbReference>
<dbReference type="GO" id="GO:0009507">
    <property type="term" value="C:chloroplast"/>
    <property type="evidence" value="ECO:0007669"/>
    <property type="project" value="UniProtKB-SubCell"/>
</dbReference>
<dbReference type="GO" id="GO:0009536">
    <property type="term" value="C:plastid"/>
    <property type="evidence" value="ECO:0000305"/>
    <property type="project" value="Gramene"/>
</dbReference>
<dbReference type="InterPro" id="IPR035337">
    <property type="entry name" value="Ycf70-like"/>
</dbReference>
<dbReference type="Pfam" id="PF17382">
    <property type="entry name" value="Ycf70"/>
    <property type="match status" value="1"/>
</dbReference>
<comment type="subcellular location">
    <subcellularLocation>
        <location>Plastid</location>
        <location>Chloroplast</location>
    </subcellularLocation>
</comment>
<comment type="similarity">
    <text evidence="1">Belongs to the ycf70 family.</text>
</comment>
<sequence length="89" mass="10565">MVYGYGKSNMPHPNRKRKGTDTQYDYWEELLVMVSGLYALFCVFLVLFIFFDSFKQESNKLELSGKEEKKKLNGENRLSRDIQNLLYIK</sequence>
<proteinExistence type="inferred from homology"/>
<protein>
    <recommendedName>
        <fullName>Uncharacterized protein ycf70</fullName>
    </recommendedName>
    <alternativeName>
        <fullName>ORF89</fullName>
    </alternativeName>
</protein>
<name>YCF70_ORYNI</name>
<feature type="chain" id="PRO_0000217400" description="Uncharacterized protein ycf70">
    <location>
        <begin position="1"/>
        <end position="89"/>
    </location>
</feature>
<organism>
    <name type="scientific">Oryza nivara</name>
    <name type="common">Indian wild rice</name>
    <name type="synonym">Oryza sativa f. spontanea</name>
    <dbReference type="NCBI Taxonomy" id="4536"/>
    <lineage>
        <taxon>Eukaryota</taxon>
        <taxon>Viridiplantae</taxon>
        <taxon>Streptophyta</taxon>
        <taxon>Embryophyta</taxon>
        <taxon>Tracheophyta</taxon>
        <taxon>Spermatophyta</taxon>
        <taxon>Magnoliopsida</taxon>
        <taxon>Liliopsida</taxon>
        <taxon>Poales</taxon>
        <taxon>Poaceae</taxon>
        <taxon>BOP clade</taxon>
        <taxon>Oryzoideae</taxon>
        <taxon>Oryzeae</taxon>
        <taxon>Oryzinae</taxon>
        <taxon>Oryza</taxon>
    </lineage>
</organism>
<accession>Q6ENI8</accession>